<keyword id="KW-0997">Cell inner membrane</keyword>
<keyword id="KW-1003">Cell membrane</keyword>
<keyword id="KW-0350">Heme biosynthesis</keyword>
<keyword id="KW-0472">Membrane</keyword>
<keyword id="KW-1185">Reference proteome</keyword>
<keyword id="KW-0808">Transferase</keyword>
<keyword id="KW-0812">Transmembrane</keyword>
<keyword id="KW-1133">Transmembrane helix</keyword>
<reference key="1">
    <citation type="journal article" date="2005" name="Genome Res.">
        <title>Coping with cold: the genome of the versatile marine Antarctica bacterium Pseudoalteromonas haloplanktis TAC125.</title>
        <authorList>
            <person name="Medigue C."/>
            <person name="Krin E."/>
            <person name="Pascal G."/>
            <person name="Barbe V."/>
            <person name="Bernsel A."/>
            <person name="Bertin P.N."/>
            <person name="Cheung F."/>
            <person name="Cruveiller S."/>
            <person name="D'Amico S."/>
            <person name="Duilio A."/>
            <person name="Fang G."/>
            <person name="Feller G."/>
            <person name="Ho C."/>
            <person name="Mangenot S."/>
            <person name="Marino G."/>
            <person name="Nilsson J."/>
            <person name="Parrilli E."/>
            <person name="Rocha E.P.C."/>
            <person name="Rouy Z."/>
            <person name="Sekowska A."/>
            <person name="Tutino M.L."/>
            <person name="Vallenet D."/>
            <person name="von Heijne G."/>
            <person name="Danchin A."/>
        </authorList>
    </citation>
    <scope>NUCLEOTIDE SEQUENCE [LARGE SCALE GENOMIC DNA]</scope>
    <source>
        <strain>TAC 125</strain>
    </source>
</reference>
<organism>
    <name type="scientific">Pseudoalteromonas translucida (strain TAC 125)</name>
    <dbReference type="NCBI Taxonomy" id="326442"/>
    <lineage>
        <taxon>Bacteria</taxon>
        <taxon>Pseudomonadati</taxon>
        <taxon>Pseudomonadota</taxon>
        <taxon>Gammaproteobacteria</taxon>
        <taxon>Alteromonadales</taxon>
        <taxon>Pseudoalteromonadaceae</taxon>
        <taxon>Pseudoalteromonas</taxon>
    </lineage>
</organism>
<gene>
    <name evidence="1" type="primary">cyoE2</name>
    <name type="ordered locus">PSHAa2865</name>
</gene>
<protein>
    <recommendedName>
        <fullName evidence="1">Protoheme IX farnesyltransferase 2</fullName>
        <ecNumber evidence="1">2.5.1.141</ecNumber>
    </recommendedName>
    <alternativeName>
        <fullName evidence="1">Heme B farnesyltransferase 2</fullName>
    </alternativeName>
    <alternativeName>
        <fullName evidence="1">Heme O synthase 2</fullName>
    </alternativeName>
</protein>
<comment type="function">
    <text evidence="1">Converts heme B (protoheme IX) to heme O by substitution of the vinyl group on carbon 2 of heme B porphyrin ring with a hydroxyethyl farnesyl side group.</text>
</comment>
<comment type="catalytic activity">
    <reaction evidence="1">
        <text>heme b + (2E,6E)-farnesyl diphosphate + H2O = Fe(II)-heme o + diphosphate</text>
        <dbReference type="Rhea" id="RHEA:28070"/>
        <dbReference type="ChEBI" id="CHEBI:15377"/>
        <dbReference type="ChEBI" id="CHEBI:33019"/>
        <dbReference type="ChEBI" id="CHEBI:60344"/>
        <dbReference type="ChEBI" id="CHEBI:60530"/>
        <dbReference type="ChEBI" id="CHEBI:175763"/>
        <dbReference type="EC" id="2.5.1.141"/>
    </reaction>
</comment>
<comment type="pathway">
    <text evidence="1">Porphyrin-containing compound metabolism; heme O biosynthesis; heme O from protoheme: step 1/1.</text>
</comment>
<comment type="subcellular location">
    <subcellularLocation>
        <location evidence="1">Cell inner membrane</location>
        <topology evidence="1">Multi-pass membrane protein</topology>
    </subcellularLocation>
</comment>
<comment type="miscellaneous">
    <text evidence="1">Carbon 2 of the heme B porphyrin ring is defined according to the Fischer nomenclature.</text>
</comment>
<comment type="similarity">
    <text evidence="1">Belongs to the UbiA prenyltransferase family. Protoheme IX farnesyltransferase subfamily.</text>
</comment>
<evidence type="ECO:0000255" key="1">
    <source>
        <dbReference type="HAMAP-Rule" id="MF_00154"/>
    </source>
</evidence>
<feature type="chain" id="PRO_0000326917" description="Protoheme IX farnesyltransferase 2">
    <location>
        <begin position="1"/>
        <end position="309"/>
    </location>
</feature>
<feature type="transmembrane region" description="Helical" evidence="1">
    <location>
        <begin position="35"/>
        <end position="55"/>
    </location>
</feature>
<feature type="transmembrane region" description="Helical" evidence="1">
    <location>
        <begin position="59"/>
        <end position="79"/>
    </location>
</feature>
<feature type="transmembrane region" description="Helical" evidence="1">
    <location>
        <begin position="107"/>
        <end position="127"/>
    </location>
</feature>
<feature type="transmembrane region" description="Helical" evidence="1">
    <location>
        <begin position="131"/>
        <end position="151"/>
    </location>
</feature>
<feature type="transmembrane region" description="Helical" evidence="1">
    <location>
        <begin position="159"/>
        <end position="179"/>
    </location>
</feature>
<feature type="transmembrane region" description="Helical" evidence="1">
    <location>
        <begin position="186"/>
        <end position="206"/>
    </location>
</feature>
<feature type="transmembrane region" description="Helical" evidence="1">
    <location>
        <begin position="238"/>
        <end position="258"/>
    </location>
</feature>
<feature type="transmembrane region" description="Helical" evidence="1">
    <location>
        <begin position="289"/>
        <end position="309"/>
    </location>
</feature>
<accession>Q3IJQ0</accession>
<proteinExistence type="inferred from homology"/>
<dbReference type="EC" id="2.5.1.141" evidence="1"/>
<dbReference type="EMBL" id="CR954246">
    <property type="protein sequence ID" value="CAI87901.1"/>
    <property type="molecule type" value="Genomic_DNA"/>
</dbReference>
<dbReference type="SMR" id="Q3IJQ0"/>
<dbReference type="STRING" id="326442.PSHAa2865"/>
<dbReference type="KEGG" id="pha:PSHAa2865"/>
<dbReference type="PATRIC" id="fig|326442.8.peg.2764"/>
<dbReference type="eggNOG" id="COG0109">
    <property type="taxonomic scope" value="Bacteria"/>
</dbReference>
<dbReference type="HOGENOM" id="CLU_029631_0_2_6"/>
<dbReference type="BioCyc" id="PHAL326442:PSHA_RS14055-MONOMER"/>
<dbReference type="UniPathway" id="UPA00834">
    <property type="reaction ID" value="UER00712"/>
</dbReference>
<dbReference type="Proteomes" id="UP000006843">
    <property type="component" value="Chromosome I"/>
</dbReference>
<dbReference type="GO" id="GO:0005886">
    <property type="term" value="C:plasma membrane"/>
    <property type="evidence" value="ECO:0007669"/>
    <property type="project" value="UniProtKB-SubCell"/>
</dbReference>
<dbReference type="GO" id="GO:0008495">
    <property type="term" value="F:protoheme IX farnesyltransferase activity"/>
    <property type="evidence" value="ECO:0007669"/>
    <property type="project" value="UniProtKB-UniRule"/>
</dbReference>
<dbReference type="GO" id="GO:0048034">
    <property type="term" value="P:heme O biosynthetic process"/>
    <property type="evidence" value="ECO:0007669"/>
    <property type="project" value="UniProtKB-UniRule"/>
</dbReference>
<dbReference type="CDD" id="cd13957">
    <property type="entry name" value="PT_UbiA_Cox10"/>
    <property type="match status" value="1"/>
</dbReference>
<dbReference type="Gene3D" id="1.10.357.140">
    <property type="entry name" value="UbiA prenyltransferase"/>
    <property type="match status" value="1"/>
</dbReference>
<dbReference type="HAMAP" id="MF_00154">
    <property type="entry name" value="CyoE_CtaB"/>
    <property type="match status" value="1"/>
</dbReference>
<dbReference type="InterPro" id="IPR006369">
    <property type="entry name" value="Protohaem_IX_farnesylTrfase"/>
</dbReference>
<dbReference type="InterPro" id="IPR000537">
    <property type="entry name" value="UbiA_prenyltransferase"/>
</dbReference>
<dbReference type="InterPro" id="IPR030470">
    <property type="entry name" value="UbiA_prenylTrfase_CS"/>
</dbReference>
<dbReference type="InterPro" id="IPR044878">
    <property type="entry name" value="UbiA_sf"/>
</dbReference>
<dbReference type="NCBIfam" id="TIGR01473">
    <property type="entry name" value="cyoE_ctaB"/>
    <property type="match status" value="1"/>
</dbReference>
<dbReference type="NCBIfam" id="NF003349">
    <property type="entry name" value="PRK04375.1-2"/>
    <property type="match status" value="1"/>
</dbReference>
<dbReference type="PANTHER" id="PTHR43448:SF7">
    <property type="entry name" value="4-HYDROXYBENZOATE SOLANESYLTRANSFERASE"/>
    <property type="match status" value="1"/>
</dbReference>
<dbReference type="PANTHER" id="PTHR43448">
    <property type="entry name" value="PROTOHEME IX FARNESYLTRANSFERASE, MITOCHONDRIAL"/>
    <property type="match status" value="1"/>
</dbReference>
<dbReference type="Pfam" id="PF01040">
    <property type="entry name" value="UbiA"/>
    <property type="match status" value="1"/>
</dbReference>
<dbReference type="PROSITE" id="PS00943">
    <property type="entry name" value="UBIA"/>
    <property type="match status" value="1"/>
</dbReference>
<name>CYOE2_PSET1</name>
<sequence>MALTIDKKAIQPINTLPLITRSYNLLQDYLAISKFKVVAMLVLTAWVGLALAPDVGRGMGVQFISLLGIGLLSAAAAVINHVVDSEIDSKMARTRHRPVAKGRLSKAHALSFAAIIGVAGFIMLMLWANTLTAILTLFALVGYAFVYTSFLKRATPQNIVIGGLAGAMPPLLGWVSETGQMAAAPWLLVMIIFTWTPPHFWALAIARKSDYARAKIPMLPVTHGIDFSKTCVVAYSVLLAIVCIFPYLIGMSGLIYLIGASGLNAVFIYKAIKLKLAANDDTAMDLFRFSIIHLMVLFIILFIDKWLLL</sequence>